<dbReference type="EC" id="2.3.1.-" evidence="2"/>
<dbReference type="EMBL" id="AE005174">
    <property type="protein sequence ID" value="AAG59078.1"/>
    <property type="molecule type" value="Genomic_DNA"/>
</dbReference>
<dbReference type="EMBL" id="BA000007">
    <property type="protein sequence ID" value="BAB38234.2"/>
    <property type="status" value="ALT_INIT"/>
    <property type="molecule type" value="Genomic_DNA"/>
</dbReference>
<dbReference type="PIR" id="C91230">
    <property type="entry name" value="C91230"/>
</dbReference>
<dbReference type="RefSeq" id="NP_312838.1">
    <property type="nucleotide sequence ID" value="NC_002695.1"/>
</dbReference>
<dbReference type="SMR" id="P0ADQ4"/>
<dbReference type="STRING" id="155864.Z5427"/>
<dbReference type="GeneID" id="915092"/>
<dbReference type="KEGG" id="ece:Z5427"/>
<dbReference type="KEGG" id="ecs:ECs_4811"/>
<dbReference type="PATRIC" id="fig|386585.9.peg.5026"/>
<dbReference type="eggNOG" id="COG0456">
    <property type="taxonomic scope" value="Bacteria"/>
</dbReference>
<dbReference type="HOGENOM" id="CLU_063776_0_0_6"/>
<dbReference type="OMA" id="DWCAELQ"/>
<dbReference type="UniPathway" id="UPA00094"/>
<dbReference type="Proteomes" id="UP000000558">
    <property type="component" value="Chromosome"/>
</dbReference>
<dbReference type="Proteomes" id="UP000002519">
    <property type="component" value="Chromosome"/>
</dbReference>
<dbReference type="GO" id="GO:0008080">
    <property type="term" value="F:N-acetyltransferase activity"/>
    <property type="evidence" value="ECO:0007669"/>
    <property type="project" value="TreeGrafter"/>
</dbReference>
<dbReference type="GO" id="GO:0006633">
    <property type="term" value="P:fatty acid biosynthetic process"/>
    <property type="evidence" value="ECO:0007669"/>
    <property type="project" value="UniProtKB-UniPathway"/>
</dbReference>
<dbReference type="CDD" id="cd04301">
    <property type="entry name" value="NAT_SF"/>
    <property type="match status" value="1"/>
</dbReference>
<dbReference type="FunFam" id="3.40.630.30:FF:000012">
    <property type="entry name" value="GNAT family acetyltransferase"/>
    <property type="match status" value="1"/>
</dbReference>
<dbReference type="Gene3D" id="3.40.630.30">
    <property type="match status" value="1"/>
</dbReference>
<dbReference type="Gene3D" id="3.10.129.10">
    <property type="entry name" value="Hotdog Thioesterase"/>
    <property type="match status" value="1"/>
</dbReference>
<dbReference type="InterPro" id="IPR016181">
    <property type="entry name" value="Acyl_CoA_acyltransferase"/>
</dbReference>
<dbReference type="InterPro" id="IPR000182">
    <property type="entry name" value="GNAT_dom"/>
</dbReference>
<dbReference type="InterPro" id="IPR039143">
    <property type="entry name" value="GNPNAT1-like"/>
</dbReference>
<dbReference type="InterPro" id="IPR029069">
    <property type="entry name" value="HotDog_dom_sf"/>
</dbReference>
<dbReference type="InterPro" id="IPR012660">
    <property type="entry name" value="YiiD_C"/>
</dbReference>
<dbReference type="NCBIfam" id="TIGR02447">
    <property type="entry name" value="yiiD_Cterm"/>
    <property type="match status" value="1"/>
</dbReference>
<dbReference type="PANTHER" id="PTHR13355">
    <property type="entry name" value="GLUCOSAMINE 6-PHOSPHATE N-ACETYLTRANSFERASE"/>
    <property type="match status" value="1"/>
</dbReference>
<dbReference type="PANTHER" id="PTHR13355:SF22">
    <property type="entry name" value="SLL0786 PROTEIN"/>
    <property type="match status" value="1"/>
</dbReference>
<dbReference type="Pfam" id="PF00583">
    <property type="entry name" value="Acetyltransf_1"/>
    <property type="match status" value="1"/>
</dbReference>
<dbReference type="Pfam" id="PF09500">
    <property type="entry name" value="YiiD_C"/>
    <property type="match status" value="1"/>
</dbReference>
<dbReference type="SUPFAM" id="SSF55729">
    <property type="entry name" value="Acyl-CoA N-acyltransferases (Nat)"/>
    <property type="match status" value="1"/>
</dbReference>
<dbReference type="SUPFAM" id="SSF54637">
    <property type="entry name" value="Thioesterase/thiol ester dehydrase-isomerase"/>
    <property type="match status" value="1"/>
</dbReference>
<dbReference type="PROSITE" id="PS51186">
    <property type="entry name" value="GNAT"/>
    <property type="match status" value="1"/>
</dbReference>
<proteinExistence type="inferred from homology"/>
<organism>
    <name type="scientific">Escherichia coli O157:H7</name>
    <dbReference type="NCBI Taxonomy" id="83334"/>
    <lineage>
        <taxon>Bacteria</taxon>
        <taxon>Pseudomonadati</taxon>
        <taxon>Pseudomonadota</taxon>
        <taxon>Gammaproteobacteria</taxon>
        <taxon>Enterobacterales</taxon>
        <taxon>Enterobacteriaceae</taxon>
        <taxon>Escherichia</taxon>
    </lineage>
</organism>
<accession>P0ADQ4</accession>
<accession>P32148</accession>
<reference key="1">
    <citation type="journal article" date="2001" name="Nature">
        <title>Genome sequence of enterohaemorrhagic Escherichia coli O157:H7.</title>
        <authorList>
            <person name="Perna N.T."/>
            <person name="Plunkett G. III"/>
            <person name="Burland V."/>
            <person name="Mau B."/>
            <person name="Glasner J.D."/>
            <person name="Rose D.J."/>
            <person name="Mayhew G.F."/>
            <person name="Evans P.S."/>
            <person name="Gregor J."/>
            <person name="Kirkpatrick H.A."/>
            <person name="Posfai G."/>
            <person name="Hackett J."/>
            <person name="Klink S."/>
            <person name="Boutin A."/>
            <person name="Shao Y."/>
            <person name="Miller L."/>
            <person name="Grotbeck E.J."/>
            <person name="Davis N.W."/>
            <person name="Lim A."/>
            <person name="Dimalanta E.T."/>
            <person name="Potamousis K."/>
            <person name="Apodaca J."/>
            <person name="Anantharaman T.S."/>
            <person name="Lin J."/>
            <person name="Yen G."/>
            <person name="Schwartz D.C."/>
            <person name="Welch R.A."/>
            <person name="Blattner F.R."/>
        </authorList>
    </citation>
    <scope>NUCLEOTIDE SEQUENCE [LARGE SCALE GENOMIC DNA]</scope>
    <source>
        <strain>O157:H7 / EDL933 / ATCC 700927 / EHEC</strain>
    </source>
</reference>
<reference key="2">
    <citation type="journal article" date="2001" name="DNA Res.">
        <title>Complete genome sequence of enterohemorrhagic Escherichia coli O157:H7 and genomic comparison with a laboratory strain K-12.</title>
        <authorList>
            <person name="Hayashi T."/>
            <person name="Makino K."/>
            <person name="Ohnishi M."/>
            <person name="Kurokawa K."/>
            <person name="Ishii K."/>
            <person name="Yokoyama K."/>
            <person name="Han C.-G."/>
            <person name="Ohtsubo E."/>
            <person name="Nakayama K."/>
            <person name="Murata T."/>
            <person name="Tanaka M."/>
            <person name="Tobe T."/>
            <person name="Iida T."/>
            <person name="Takami H."/>
            <person name="Honda T."/>
            <person name="Sasakawa C."/>
            <person name="Ogasawara N."/>
            <person name="Yasunaga T."/>
            <person name="Kuhara S."/>
            <person name="Shiba T."/>
            <person name="Hattori M."/>
            <person name="Shinagawa H."/>
        </authorList>
    </citation>
    <scope>NUCLEOTIDE SEQUENCE [LARGE SCALE GENOMIC DNA]</scope>
    <source>
        <strain>O157:H7 / Sakai / RIMD 0509952 / EHEC</strain>
    </source>
</reference>
<evidence type="ECO:0000250" key="1">
    <source>
        <dbReference type="UniProtKB" id="P0ADQ2"/>
    </source>
</evidence>
<evidence type="ECO:0000255" key="2">
    <source>
        <dbReference type="PROSITE-ProRule" id="PRU00532"/>
    </source>
</evidence>
<evidence type="ECO:0000305" key="3"/>
<sequence length="329" mass="37094">MSQLPGLSRETRESIAMYHLRVPQTEEELERYYQFRWEMLRKPLHQPKGSERDAWDAMAHHQMVVDEQGNLVAVGRLYINADNEASIRFMAVHPDVQDKGLGTLMAMTLESVARQEGVKRVTCSAREDAVEFFAKLGFVNQGEITTPTTTPIRHFLMIKPVATLDDILHRGDWCAQLQQAWYEHIPLSEKMGVRIQQYTGQKFITTMPETGNQNPHHTLFAGSLFSLATLTGWGLIWLMLRERHLGGTIILADAHIRYSKPISGKPHAVADLGALSGDLDRLARGRKARVQMQVEIFGDETPGAVFEGTYIVLPAKPFGPYEEGGNEEE</sequence>
<gene>
    <name evidence="1" type="primary">fabY</name>
    <name type="synonym">yiiD</name>
    <name type="ordered locus">Z5427</name>
    <name type="ordered locus">ECs4811</name>
</gene>
<feature type="chain" id="PRO_0000169680" description="Probable acyltransferase FabY">
    <location>
        <begin position="1"/>
        <end position="329"/>
    </location>
</feature>
<feature type="domain" description="N-acetyltransferase" evidence="2">
    <location>
        <begin position="18"/>
        <end position="162"/>
    </location>
</feature>
<keyword id="KW-0012">Acyltransferase</keyword>
<keyword id="KW-0443">Lipid metabolism</keyword>
<keyword id="KW-1185">Reference proteome</keyword>
<keyword id="KW-0808">Transferase</keyword>
<comment type="function">
    <text evidence="1">Supports initiation of fatty acid biosynthesis in the absence of FabH.</text>
</comment>
<comment type="pathway">
    <text evidence="1">Lipid metabolism; fatty acid biosynthesis.</text>
</comment>
<comment type="similarity">
    <text evidence="3">Belongs to the acetyltransferase family. FabY subfamily.</text>
</comment>
<comment type="sequence caution" evidence="3">
    <conflict type="erroneous initiation">
        <sequence resource="EMBL-CDS" id="BAB38234"/>
    </conflict>
    <text>Truncated N-terminus.</text>
</comment>
<protein>
    <recommendedName>
        <fullName evidence="1">Probable acyltransferase FabY</fullName>
        <ecNumber evidence="2">2.3.1.-</ecNumber>
    </recommendedName>
</protein>
<name>FABY_ECO57</name>